<protein>
    <recommendedName>
        <fullName evidence="1">Small ribosomal subunit protein eS1</fullName>
    </recommendedName>
    <alternativeName>
        <fullName evidence="3">40S ribosomal protein S1</fullName>
    </alternativeName>
</protein>
<comment type="subunit">
    <text evidence="1">Component of the small ribosomal subunit. Mature ribosomes consist of a small (40S) and a large (60S) subunit. The 40S subunit contains about 33 different proteins and 1 molecule of RNA (18S). The 60S subunit contains about 49 different proteins and 3 molecules of RNA (25S, 5.8S and 5S).</text>
</comment>
<comment type="subcellular location">
    <subcellularLocation>
        <location evidence="1">Cytoplasm</location>
    </subcellularLocation>
</comment>
<comment type="similarity">
    <text evidence="1">Belongs to the eukaryotic ribosomal protein eS1 family.</text>
</comment>
<comment type="sequence caution" evidence="3">
    <conflict type="erroneous gene model prediction">
        <sequence resource="EMBL-CDS" id="EEH50446"/>
    </conflict>
</comment>
<organism>
    <name type="scientific">Paracoccidioides brasiliensis (strain Pb18)</name>
    <dbReference type="NCBI Taxonomy" id="502780"/>
    <lineage>
        <taxon>Eukaryota</taxon>
        <taxon>Fungi</taxon>
        <taxon>Dikarya</taxon>
        <taxon>Ascomycota</taxon>
        <taxon>Pezizomycotina</taxon>
        <taxon>Eurotiomycetes</taxon>
        <taxon>Eurotiomycetidae</taxon>
        <taxon>Onygenales</taxon>
        <taxon>Ajellomycetaceae</taxon>
        <taxon>Paracoccidioides</taxon>
    </lineage>
</organism>
<keyword id="KW-0007">Acetylation</keyword>
<keyword id="KW-0963">Cytoplasm</keyword>
<keyword id="KW-1185">Reference proteome</keyword>
<keyword id="KW-0687">Ribonucleoprotein</keyword>
<keyword id="KW-0689">Ribosomal protein</keyword>
<evidence type="ECO:0000255" key="1">
    <source>
        <dbReference type="HAMAP-Rule" id="MF_03122"/>
    </source>
</evidence>
<evidence type="ECO:0000256" key="2">
    <source>
        <dbReference type="SAM" id="MobiDB-lite"/>
    </source>
</evidence>
<evidence type="ECO:0000305" key="3"/>
<name>RS3A_PARBD</name>
<accession>C1GGT8</accession>
<feature type="initiator methionine" description="Removed" evidence="1">
    <location>
        <position position="1"/>
    </location>
</feature>
<feature type="chain" id="PRO_0000389393" description="Small ribosomal subunit protein eS1">
    <location>
        <begin position="2"/>
        <end position="255"/>
    </location>
</feature>
<feature type="region of interest" description="Disordered" evidence="2">
    <location>
        <begin position="1"/>
        <end position="28"/>
    </location>
</feature>
<feature type="compositionally biased region" description="Basic residues" evidence="2">
    <location>
        <begin position="1"/>
        <end position="18"/>
    </location>
</feature>
<feature type="compositionally biased region" description="Basic and acidic residues" evidence="2">
    <location>
        <begin position="19"/>
        <end position="28"/>
    </location>
</feature>
<feature type="modified residue" description="N-acetylalanine; partial" evidence="1">
    <location>
        <position position="2"/>
    </location>
</feature>
<dbReference type="EMBL" id="KN275964">
    <property type="protein sequence ID" value="EEH50446.2"/>
    <property type="status" value="ALT_SEQ"/>
    <property type="molecule type" value="Genomic_DNA"/>
</dbReference>
<dbReference type="RefSeq" id="XP_010761786.1">
    <property type="nucleotide sequence ID" value="XM_010763484.1"/>
</dbReference>
<dbReference type="SMR" id="C1GGT8"/>
<dbReference type="FunCoup" id="C1GGT8">
    <property type="interactions" value="1197"/>
</dbReference>
<dbReference type="STRING" id="502780.C1GGT8"/>
<dbReference type="GeneID" id="22585233"/>
<dbReference type="KEGG" id="pbn:PADG_06525"/>
<dbReference type="eggNOG" id="KOG1628">
    <property type="taxonomic scope" value="Eukaryota"/>
</dbReference>
<dbReference type="HOGENOM" id="CLU_062507_0_0_1"/>
<dbReference type="InParanoid" id="C1GGT8"/>
<dbReference type="OrthoDB" id="31371at33183"/>
<dbReference type="Proteomes" id="UP000001628">
    <property type="component" value="Unassembled WGS sequence"/>
</dbReference>
<dbReference type="GO" id="GO:0022627">
    <property type="term" value="C:cytosolic small ribosomal subunit"/>
    <property type="evidence" value="ECO:0007669"/>
    <property type="project" value="UniProtKB-UniRule"/>
</dbReference>
<dbReference type="GO" id="GO:0003735">
    <property type="term" value="F:structural constituent of ribosome"/>
    <property type="evidence" value="ECO:0007669"/>
    <property type="project" value="UniProtKB-UniRule"/>
</dbReference>
<dbReference type="GO" id="GO:0006412">
    <property type="term" value="P:translation"/>
    <property type="evidence" value="ECO:0007669"/>
    <property type="project" value="UniProtKB-UniRule"/>
</dbReference>
<dbReference type="HAMAP" id="MF_03122">
    <property type="entry name" value="Ribosomal_eS1_euk"/>
    <property type="match status" value="1"/>
</dbReference>
<dbReference type="InterPro" id="IPR001593">
    <property type="entry name" value="Ribosomal_eS1"/>
</dbReference>
<dbReference type="InterPro" id="IPR018281">
    <property type="entry name" value="Ribosomal_eS1_CS"/>
</dbReference>
<dbReference type="InterPro" id="IPR027500">
    <property type="entry name" value="Ribosomal_eS1_euk"/>
</dbReference>
<dbReference type="PANTHER" id="PTHR11830">
    <property type="entry name" value="40S RIBOSOMAL PROTEIN S3A"/>
    <property type="match status" value="1"/>
</dbReference>
<dbReference type="Pfam" id="PF01015">
    <property type="entry name" value="Ribosomal_S3Ae"/>
    <property type="match status" value="1"/>
</dbReference>
<dbReference type="SMART" id="SM01397">
    <property type="entry name" value="Ribosomal_S3Ae"/>
    <property type="match status" value="1"/>
</dbReference>
<dbReference type="PROSITE" id="PS01191">
    <property type="entry name" value="RIBOSOMAL_S3AE"/>
    <property type="match status" value="1"/>
</dbReference>
<sequence length="255" mass="28973">MAVGKNKRLSKGKKGLKKRTQDPFSRKDEYSVKAPSTFAIRDVGKTLVNRTTGLKNANDALKGRIFEVSLADLQNDEDHAFRKVKLRVDEVQGKNCLTNFHGLDFTSDKLRSLVRKWQTLIEANVTVKTTDDYLLRLFAIAFTKRRPNQIKKTTYAQSSQIRAIRKKMVEIIQREAGTRSLAQLTKLIPEVIGREIEKATHGIYPLQNVHIRKVKLLKSPKFDLGALLALHGESSTDDKGQKVEREFKETVLESV</sequence>
<proteinExistence type="inferred from homology"/>
<gene>
    <name evidence="1" type="primary">RPS1</name>
    <name type="ORF">PADG_06525</name>
</gene>
<reference key="1">
    <citation type="journal article" date="2011" name="PLoS Genet.">
        <title>Comparative genomic analysis of human fungal pathogens causing paracoccidioidomycosis.</title>
        <authorList>
            <person name="Desjardins C.A."/>
            <person name="Champion M.D."/>
            <person name="Holder J.W."/>
            <person name="Muszewska A."/>
            <person name="Goldberg J."/>
            <person name="Bailao A.M."/>
            <person name="Brigido M.M."/>
            <person name="Ferreira M.E."/>
            <person name="Garcia A.M."/>
            <person name="Grynberg M."/>
            <person name="Gujja S."/>
            <person name="Heiman D.I."/>
            <person name="Henn M.R."/>
            <person name="Kodira C.D."/>
            <person name="Leon-Narvaez H."/>
            <person name="Longo L.V.G."/>
            <person name="Ma L.-J."/>
            <person name="Malavazi I."/>
            <person name="Matsuo A.L."/>
            <person name="Morais F.V."/>
            <person name="Pereira M."/>
            <person name="Rodriguez-Brito S."/>
            <person name="Sakthikumar S."/>
            <person name="Salem-Izacc S.M."/>
            <person name="Sykes S.M."/>
            <person name="Teixeira M.M."/>
            <person name="Vallejo M.C."/>
            <person name="Walter M.E."/>
            <person name="Yandava C."/>
            <person name="Young S."/>
            <person name="Zeng Q."/>
            <person name="Zucker J."/>
            <person name="Felipe M.S."/>
            <person name="Goldman G.H."/>
            <person name="Haas B.J."/>
            <person name="McEwen J.G."/>
            <person name="Nino-Vega G."/>
            <person name="Puccia R."/>
            <person name="San-Blas G."/>
            <person name="Soares C.M."/>
            <person name="Birren B.W."/>
            <person name="Cuomo C.A."/>
        </authorList>
    </citation>
    <scope>NUCLEOTIDE SEQUENCE [LARGE SCALE GENOMIC DNA]</scope>
    <source>
        <strain>Pb18</strain>
    </source>
</reference>